<keyword id="KW-0963">Cytoplasm</keyword>
<keyword id="KW-0328">Glycosyltransferase</keyword>
<keyword id="KW-0660">Purine salvage</keyword>
<keyword id="KW-0808">Transferase</keyword>
<feature type="chain" id="PRO_1000201663" description="Adenine phosphoribosyltransferase">
    <location>
        <begin position="1"/>
        <end position="174"/>
    </location>
</feature>
<organism>
    <name type="scientific">Agathobacter rectalis (strain ATCC 33656 / DSM 3377 / JCM 17463 / KCTC 5835 / VPI 0990)</name>
    <name type="common">Eubacterium rectale</name>
    <dbReference type="NCBI Taxonomy" id="515619"/>
    <lineage>
        <taxon>Bacteria</taxon>
        <taxon>Bacillati</taxon>
        <taxon>Bacillota</taxon>
        <taxon>Clostridia</taxon>
        <taxon>Lachnospirales</taxon>
        <taxon>Lachnospiraceae</taxon>
        <taxon>Agathobacter</taxon>
    </lineage>
</organism>
<protein>
    <recommendedName>
        <fullName evidence="1">Adenine phosphoribosyltransferase</fullName>
        <shortName evidence="1">APRT</shortName>
        <ecNumber evidence="1">2.4.2.7</ecNumber>
    </recommendedName>
</protein>
<proteinExistence type="inferred from homology"/>
<sequence length="174" mass="19078">MKTVKDYIRTIPDFPEKGIMFRDVTSVIQDADGLKLAIDEMIKRLDGLDFDVIAGAESRGFVFGMPIAYALHKPFVMVRKAGKLPCETVSKTYDLEYGTATIEMHKDSVKPGQKVVLVDDLIATGGTMQAAAELVEELGGEVVKMLFLIELAGLNGRKLLSKYDVDAVVSYDGK</sequence>
<gene>
    <name evidence="1" type="primary">apt</name>
    <name type="ordered locus">EUBREC_2433</name>
</gene>
<accession>C4ZF43</accession>
<reference key="1">
    <citation type="journal article" date="2009" name="Proc. Natl. Acad. Sci. U.S.A.">
        <title>Characterizing a model human gut microbiota composed of members of its two dominant bacterial phyla.</title>
        <authorList>
            <person name="Mahowald M.A."/>
            <person name="Rey F.E."/>
            <person name="Seedorf H."/>
            <person name="Turnbaugh P.J."/>
            <person name="Fulton R.S."/>
            <person name="Wollam A."/>
            <person name="Shah N."/>
            <person name="Wang C."/>
            <person name="Magrini V."/>
            <person name="Wilson R.K."/>
            <person name="Cantarel B.L."/>
            <person name="Coutinho P.M."/>
            <person name="Henrissat B."/>
            <person name="Crock L.W."/>
            <person name="Russell A."/>
            <person name="Verberkmoes N.C."/>
            <person name="Hettich R.L."/>
            <person name="Gordon J.I."/>
        </authorList>
    </citation>
    <scope>NUCLEOTIDE SEQUENCE [LARGE SCALE GENOMIC DNA]</scope>
    <source>
        <strain>ATCC 33656 / DSM 3377 / JCM 17463 / KCTC 5835 / LMG 30912 / VPI 0990</strain>
    </source>
</reference>
<comment type="function">
    <text evidence="1">Catalyzes a salvage reaction resulting in the formation of AMP, that is energically less costly than de novo synthesis.</text>
</comment>
<comment type="catalytic activity">
    <reaction evidence="1">
        <text>AMP + diphosphate = 5-phospho-alpha-D-ribose 1-diphosphate + adenine</text>
        <dbReference type="Rhea" id="RHEA:16609"/>
        <dbReference type="ChEBI" id="CHEBI:16708"/>
        <dbReference type="ChEBI" id="CHEBI:33019"/>
        <dbReference type="ChEBI" id="CHEBI:58017"/>
        <dbReference type="ChEBI" id="CHEBI:456215"/>
        <dbReference type="EC" id="2.4.2.7"/>
    </reaction>
</comment>
<comment type="pathway">
    <text evidence="1">Purine metabolism; AMP biosynthesis via salvage pathway; AMP from adenine: step 1/1.</text>
</comment>
<comment type="subunit">
    <text evidence="1">Homodimer.</text>
</comment>
<comment type="subcellular location">
    <subcellularLocation>
        <location evidence="1">Cytoplasm</location>
    </subcellularLocation>
</comment>
<comment type="similarity">
    <text evidence="1">Belongs to the purine/pyrimidine phosphoribosyltransferase family.</text>
</comment>
<name>APT_AGARV</name>
<evidence type="ECO:0000255" key="1">
    <source>
        <dbReference type="HAMAP-Rule" id="MF_00004"/>
    </source>
</evidence>
<dbReference type="EC" id="2.4.2.7" evidence="1"/>
<dbReference type="EMBL" id="CP001107">
    <property type="protein sequence ID" value="ACR76164.1"/>
    <property type="molecule type" value="Genomic_DNA"/>
</dbReference>
<dbReference type="RefSeq" id="WP_012743258.1">
    <property type="nucleotide sequence ID" value="NC_012781.1"/>
</dbReference>
<dbReference type="SMR" id="C4ZF43"/>
<dbReference type="STRING" id="515619.EUBREC_2433"/>
<dbReference type="PaxDb" id="515619-EUBREC_2433"/>
<dbReference type="KEGG" id="ere:EUBREC_2433"/>
<dbReference type="HOGENOM" id="CLU_063339_3_0_9"/>
<dbReference type="UniPathway" id="UPA00588">
    <property type="reaction ID" value="UER00646"/>
</dbReference>
<dbReference type="Proteomes" id="UP000001477">
    <property type="component" value="Chromosome"/>
</dbReference>
<dbReference type="GO" id="GO:0005737">
    <property type="term" value="C:cytoplasm"/>
    <property type="evidence" value="ECO:0007669"/>
    <property type="project" value="UniProtKB-SubCell"/>
</dbReference>
<dbReference type="GO" id="GO:0002055">
    <property type="term" value="F:adenine binding"/>
    <property type="evidence" value="ECO:0007669"/>
    <property type="project" value="TreeGrafter"/>
</dbReference>
<dbReference type="GO" id="GO:0003999">
    <property type="term" value="F:adenine phosphoribosyltransferase activity"/>
    <property type="evidence" value="ECO:0007669"/>
    <property type="project" value="UniProtKB-UniRule"/>
</dbReference>
<dbReference type="GO" id="GO:0016208">
    <property type="term" value="F:AMP binding"/>
    <property type="evidence" value="ECO:0007669"/>
    <property type="project" value="TreeGrafter"/>
</dbReference>
<dbReference type="GO" id="GO:0006168">
    <property type="term" value="P:adenine salvage"/>
    <property type="evidence" value="ECO:0007669"/>
    <property type="project" value="InterPro"/>
</dbReference>
<dbReference type="GO" id="GO:0044209">
    <property type="term" value="P:AMP salvage"/>
    <property type="evidence" value="ECO:0007669"/>
    <property type="project" value="UniProtKB-UniRule"/>
</dbReference>
<dbReference type="GO" id="GO:0006166">
    <property type="term" value="P:purine ribonucleoside salvage"/>
    <property type="evidence" value="ECO:0007669"/>
    <property type="project" value="UniProtKB-KW"/>
</dbReference>
<dbReference type="CDD" id="cd06223">
    <property type="entry name" value="PRTases_typeI"/>
    <property type="match status" value="1"/>
</dbReference>
<dbReference type="FunFam" id="3.40.50.2020:FF:000004">
    <property type="entry name" value="Adenine phosphoribosyltransferase"/>
    <property type="match status" value="1"/>
</dbReference>
<dbReference type="Gene3D" id="3.40.50.2020">
    <property type="match status" value="1"/>
</dbReference>
<dbReference type="HAMAP" id="MF_00004">
    <property type="entry name" value="Aden_phosphoribosyltr"/>
    <property type="match status" value="1"/>
</dbReference>
<dbReference type="InterPro" id="IPR005764">
    <property type="entry name" value="Ade_phspho_trans"/>
</dbReference>
<dbReference type="InterPro" id="IPR000836">
    <property type="entry name" value="PRibTrfase_dom"/>
</dbReference>
<dbReference type="InterPro" id="IPR029057">
    <property type="entry name" value="PRTase-like"/>
</dbReference>
<dbReference type="InterPro" id="IPR050054">
    <property type="entry name" value="UPRTase/APRTase"/>
</dbReference>
<dbReference type="NCBIfam" id="TIGR01090">
    <property type="entry name" value="apt"/>
    <property type="match status" value="1"/>
</dbReference>
<dbReference type="NCBIfam" id="NF002633">
    <property type="entry name" value="PRK02304.1-2"/>
    <property type="match status" value="1"/>
</dbReference>
<dbReference type="NCBIfam" id="NF002634">
    <property type="entry name" value="PRK02304.1-3"/>
    <property type="match status" value="1"/>
</dbReference>
<dbReference type="NCBIfam" id="NF002636">
    <property type="entry name" value="PRK02304.1-5"/>
    <property type="match status" value="1"/>
</dbReference>
<dbReference type="PANTHER" id="PTHR32315">
    <property type="entry name" value="ADENINE PHOSPHORIBOSYLTRANSFERASE"/>
    <property type="match status" value="1"/>
</dbReference>
<dbReference type="PANTHER" id="PTHR32315:SF3">
    <property type="entry name" value="ADENINE PHOSPHORIBOSYLTRANSFERASE"/>
    <property type="match status" value="1"/>
</dbReference>
<dbReference type="Pfam" id="PF00156">
    <property type="entry name" value="Pribosyltran"/>
    <property type="match status" value="1"/>
</dbReference>
<dbReference type="SUPFAM" id="SSF53271">
    <property type="entry name" value="PRTase-like"/>
    <property type="match status" value="1"/>
</dbReference>
<dbReference type="PROSITE" id="PS00103">
    <property type="entry name" value="PUR_PYR_PR_TRANSFER"/>
    <property type="match status" value="1"/>
</dbReference>